<dbReference type="EC" id="2.1.1.192" evidence="1"/>
<dbReference type="EMBL" id="CP000377">
    <property type="protein sequence ID" value="ABF65746.1"/>
    <property type="molecule type" value="Genomic_DNA"/>
</dbReference>
<dbReference type="RefSeq" id="WP_011540324.1">
    <property type="nucleotide sequence ID" value="NC_008044.1"/>
</dbReference>
<dbReference type="SMR" id="Q1GC70"/>
<dbReference type="STRING" id="292414.TM1040_3014"/>
<dbReference type="KEGG" id="sit:TM1040_3014"/>
<dbReference type="eggNOG" id="COG0820">
    <property type="taxonomic scope" value="Bacteria"/>
</dbReference>
<dbReference type="HOGENOM" id="CLU_029101_0_0_5"/>
<dbReference type="OrthoDB" id="9793973at2"/>
<dbReference type="Proteomes" id="UP000000636">
    <property type="component" value="Chromosome"/>
</dbReference>
<dbReference type="GO" id="GO:0005737">
    <property type="term" value="C:cytoplasm"/>
    <property type="evidence" value="ECO:0007669"/>
    <property type="project" value="UniProtKB-SubCell"/>
</dbReference>
<dbReference type="GO" id="GO:0051539">
    <property type="term" value="F:4 iron, 4 sulfur cluster binding"/>
    <property type="evidence" value="ECO:0007669"/>
    <property type="project" value="UniProtKB-UniRule"/>
</dbReference>
<dbReference type="GO" id="GO:0046872">
    <property type="term" value="F:metal ion binding"/>
    <property type="evidence" value="ECO:0007669"/>
    <property type="project" value="UniProtKB-KW"/>
</dbReference>
<dbReference type="GO" id="GO:0070040">
    <property type="term" value="F:rRNA (adenine(2503)-C2-)-methyltransferase activity"/>
    <property type="evidence" value="ECO:0007669"/>
    <property type="project" value="UniProtKB-UniRule"/>
</dbReference>
<dbReference type="GO" id="GO:0019843">
    <property type="term" value="F:rRNA binding"/>
    <property type="evidence" value="ECO:0007669"/>
    <property type="project" value="UniProtKB-UniRule"/>
</dbReference>
<dbReference type="GO" id="GO:0002935">
    <property type="term" value="F:tRNA (adenine(37)-C2)-methyltransferase activity"/>
    <property type="evidence" value="ECO:0007669"/>
    <property type="project" value="UniProtKB-UniRule"/>
</dbReference>
<dbReference type="GO" id="GO:0000049">
    <property type="term" value="F:tRNA binding"/>
    <property type="evidence" value="ECO:0007669"/>
    <property type="project" value="UniProtKB-UniRule"/>
</dbReference>
<dbReference type="GO" id="GO:0070475">
    <property type="term" value="P:rRNA base methylation"/>
    <property type="evidence" value="ECO:0007669"/>
    <property type="project" value="UniProtKB-UniRule"/>
</dbReference>
<dbReference type="GO" id="GO:0030488">
    <property type="term" value="P:tRNA methylation"/>
    <property type="evidence" value="ECO:0007669"/>
    <property type="project" value="UniProtKB-UniRule"/>
</dbReference>
<dbReference type="CDD" id="cd01335">
    <property type="entry name" value="Radical_SAM"/>
    <property type="match status" value="1"/>
</dbReference>
<dbReference type="FunFam" id="3.20.20.70:FF:000008">
    <property type="entry name" value="Dual-specificity RNA methyltransferase RlmN"/>
    <property type="match status" value="1"/>
</dbReference>
<dbReference type="Gene3D" id="1.10.150.530">
    <property type="match status" value="1"/>
</dbReference>
<dbReference type="Gene3D" id="3.20.20.70">
    <property type="entry name" value="Aldolase class I"/>
    <property type="match status" value="1"/>
</dbReference>
<dbReference type="HAMAP" id="MF_01849">
    <property type="entry name" value="RNA_methyltr_RlmN"/>
    <property type="match status" value="1"/>
</dbReference>
<dbReference type="InterPro" id="IPR013785">
    <property type="entry name" value="Aldolase_TIM"/>
</dbReference>
<dbReference type="InterPro" id="IPR040072">
    <property type="entry name" value="Methyltransferase_A"/>
</dbReference>
<dbReference type="InterPro" id="IPR048641">
    <property type="entry name" value="RlmN_N"/>
</dbReference>
<dbReference type="InterPro" id="IPR027492">
    <property type="entry name" value="RNA_MTrfase_RlmN"/>
</dbReference>
<dbReference type="InterPro" id="IPR004383">
    <property type="entry name" value="rRNA_lsu_MTrfase_RlmN/Cfr"/>
</dbReference>
<dbReference type="InterPro" id="IPR007197">
    <property type="entry name" value="rSAM"/>
</dbReference>
<dbReference type="NCBIfam" id="TIGR00048">
    <property type="entry name" value="rRNA_mod_RlmN"/>
    <property type="match status" value="1"/>
</dbReference>
<dbReference type="PANTHER" id="PTHR30544">
    <property type="entry name" value="23S RRNA METHYLTRANSFERASE"/>
    <property type="match status" value="1"/>
</dbReference>
<dbReference type="PANTHER" id="PTHR30544:SF5">
    <property type="entry name" value="RADICAL SAM CORE DOMAIN-CONTAINING PROTEIN"/>
    <property type="match status" value="1"/>
</dbReference>
<dbReference type="Pfam" id="PF04055">
    <property type="entry name" value="Radical_SAM"/>
    <property type="match status" value="1"/>
</dbReference>
<dbReference type="Pfam" id="PF21016">
    <property type="entry name" value="RlmN_N"/>
    <property type="match status" value="1"/>
</dbReference>
<dbReference type="PIRSF" id="PIRSF006004">
    <property type="entry name" value="CHP00048"/>
    <property type="match status" value="1"/>
</dbReference>
<dbReference type="SFLD" id="SFLDF00275">
    <property type="entry name" value="adenosine_C2_methyltransferase"/>
    <property type="match status" value="1"/>
</dbReference>
<dbReference type="SFLD" id="SFLDS00029">
    <property type="entry name" value="Radical_SAM"/>
    <property type="match status" value="1"/>
</dbReference>
<dbReference type="SUPFAM" id="SSF102114">
    <property type="entry name" value="Radical SAM enzymes"/>
    <property type="match status" value="1"/>
</dbReference>
<dbReference type="PROSITE" id="PS51918">
    <property type="entry name" value="RADICAL_SAM"/>
    <property type="match status" value="1"/>
</dbReference>
<organism>
    <name type="scientific">Ruegeria sp. (strain TM1040)</name>
    <name type="common">Silicibacter sp.</name>
    <dbReference type="NCBI Taxonomy" id="292414"/>
    <lineage>
        <taxon>Bacteria</taxon>
        <taxon>Pseudomonadati</taxon>
        <taxon>Pseudomonadota</taxon>
        <taxon>Alphaproteobacteria</taxon>
        <taxon>Rhodobacterales</taxon>
        <taxon>Roseobacteraceae</taxon>
        <taxon>Ruegeria</taxon>
    </lineage>
</organism>
<sequence>MTASAPITQDVLTLPRKEPEGGKINLVGLTRDRMRAVLIENGTPEKQAKMRVGQIWQWIYQWGVRDFAEMTNLAKAYRAQLEETFEIRIPEVVSKQVSTDGTRKYLVRINGGHEVEVVYIPEDDRGTLCISSQVGCTLTCSFCHTGTQKLVRNLTPAEIIGQVMMARDDLEEWPTPGAPKDETRLLSNIVLMGMGEPLYNFDNVRDAMKIAMDPEGISLSRRRITLSTSGVVPEIARTAEEIGCLLAISFHATTNEVRDVLVPINRRWNIDELLQALADYPKVSNSERITFEYVMLDGVNDSDEDAHRLLDHIKRHNIPAKINLIPFNEWPGAPYKRSSNNRIRAFANIIYQAGYASPIRKTRGDDIMAACGQLKSATERARKSRKQIEAEAGVNNS</sequence>
<proteinExistence type="inferred from homology"/>
<gene>
    <name evidence="1" type="primary">rlmN</name>
    <name type="ordered locus">TM1040_3014</name>
</gene>
<name>RLMN_RUEST</name>
<keyword id="KW-0004">4Fe-4S</keyword>
<keyword id="KW-0963">Cytoplasm</keyword>
<keyword id="KW-1015">Disulfide bond</keyword>
<keyword id="KW-0408">Iron</keyword>
<keyword id="KW-0411">Iron-sulfur</keyword>
<keyword id="KW-0479">Metal-binding</keyword>
<keyword id="KW-0489">Methyltransferase</keyword>
<keyword id="KW-1185">Reference proteome</keyword>
<keyword id="KW-0698">rRNA processing</keyword>
<keyword id="KW-0949">S-adenosyl-L-methionine</keyword>
<keyword id="KW-0808">Transferase</keyword>
<keyword id="KW-0819">tRNA processing</keyword>
<reference key="1">
    <citation type="submission" date="2006-05" db="EMBL/GenBank/DDBJ databases">
        <title>Complete sequence of chromosome of Silicibacter sp. TM1040.</title>
        <authorList>
            <consortium name="US DOE Joint Genome Institute"/>
            <person name="Copeland A."/>
            <person name="Lucas S."/>
            <person name="Lapidus A."/>
            <person name="Barry K."/>
            <person name="Detter J.C."/>
            <person name="Glavina del Rio T."/>
            <person name="Hammon N."/>
            <person name="Israni S."/>
            <person name="Dalin E."/>
            <person name="Tice H."/>
            <person name="Pitluck S."/>
            <person name="Brettin T."/>
            <person name="Bruce D."/>
            <person name="Han C."/>
            <person name="Tapia R."/>
            <person name="Goodwin L."/>
            <person name="Thompson L.S."/>
            <person name="Gilna P."/>
            <person name="Schmutz J."/>
            <person name="Larimer F."/>
            <person name="Land M."/>
            <person name="Hauser L."/>
            <person name="Kyrpides N."/>
            <person name="Kim E."/>
            <person name="Belas R."/>
            <person name="Moran M.A."/>
            <person name="Buchan A."/>
            <person name="Gonzalez J.M."/>
            <person name="Schell M.A."/>
            <person name="Sun F."/>
            <person name="Richardson P."/>
        </authorList>
    </citation>
    <scope>NUCLEOTIDE SEQUENCE [LARGE SCALE GENOMIC DNA]</scope>
    <source>
        <strain>TM1040</strain>
    </source>
</reference>
<comment type="function">
    <text evidence="1">Specifically methylates position 2 of adenine 2503 in 23S rRNA and position 2 of adenine 37 in tRNAs. m2A2503 modification seems to play a crucial role in the proofreading step occurring at the peptidyl transferase center and thus would serve to optimize ribosomal fidelity.</text>
</comment>
<comment type="catalytic activity">
    <reaction evidence="1">
        <text>adenosine(2503) in 23S rRNA + 2 reduced [2Fe-2S]-[ferredoxin] + 2 S-adenosyl-L-methionine = 2-methyladenosine(2503) in 23S rRNA + 5'-deoxyadenosine + L-methionine + 2 oxidized [2Fe-2S]-[ferredoxin] + S-adenosyl-L-homocysteine</text>
        <dbReference type="Rhea" id="RHEA:42916"/>
        <dbReference type="Rhea" id="RHEA-COMP:10000"/>
        <dbReference type="Rhea" id="RHEA-COMP:10001"/>
        <dbReference type="Rhea" id="RHEA-COMP:10152"/>
        <dbReference type="Rhea" id="RHEA-COMP:10282"/>
        <dbReference type="ChEBI" id="CHEBI:17319"/>
        <dbReference type="ChEBI" id="CHEBI:33737"/>
        <dbReference type="ChEBI" id="CHEBI:33738"/>
        <dbReference type="ChEBI" id="CHEBI:57844"/>
        <dbReference type="ChEBI" id="CHEBI:57856"/>
        <dbReference type="ChEBI" id="CHEBI:59789"/>
        <dbReference type="ChEBI" id="CHEBI:74411"/>
        <dbReference type="ChEBI" id="CHEBI:74497"/>
        <dbReference type="EC" id="2.1.1.192"/>
    </reaction>
</comment>
<comment type="catalytic activity">
    <reaction evidence="1">
        <text>adenosine(37) in tRNA + 2 reduced [2Fe-2S]-[ferredoxin] + 2 S-adenosyl-L-methionine = 2-methyladenosine(37) in tRNA + 5'-deoxyadenosine + L-methionine + 2 oxidized [2Fe-2S]-[ferredoxin] + S-adenosyl-L-homocysteine</text>
        <dbReference type="Rhea" id="RHEA:43332"/>
        <dbReference type="Rhea" id="RHEA-COMP:10000"/>
        <dbReference type="Rhea" id="RHEA-COMP:10001"/>
        <dbReference type="Rhea" id="RHEA-COMP:10162"/>
        <dbReference type="Rhea" id="RHEA-COMP:10485"/>
        <dbReference type="ChEBI" id="CHEBI:17319"/>
        <dbReference type="ChEBI" id="CHEBI:33737"/>
        <dbReference type="ChEBI" id="CHEBI:33738"/>
        <dbReference type="ChEBI" id="CHEBI:57844"/>
        <dbReference type="ChEBI" id="CHEBI:57856"/>
        <dbReference type="ChEBI" id="CHEBI:59789"/>
        <dbReference type="ChEBI" id="CHEBI:74411"/>
        <dbReference type="ChEBI" id="CHEBI:74497"/>
        <dbReference type="EC" id="2.1.1.192"/>
    </reaction>
</comment>
<comment type="cofactor">
    <cofactor evidence="1">
        <name>[4Fe-4S] cluster</name>
        <dbReference type="ChEBI" id="CHEBI:49883"/>
    </cofactor>
    <text evidence="1">Binds 1 [4Fe-4S] cluster. The cluster is coordinated with 3 cysteines and an exchangeable S-adenosyl-L-methionine.</text>
</comment>
<comment type="subcellular location">
    <subcellularLocation>
        <location evidence="1">Cytoplasm</location>
    </subcellularLocation>
</comment>
<comment type="miscellaneous">
    <text evidence="1">Reaction proceeds by a ping-pong mechanism involving intermediate methylation of a conserved cysteine residue.</text>
</comment>
<comment type="similarity">
    <text evidence="1">Belongs to the radical SAM superfamily. RlmN family.</text>
</comment>
<evidence type="ECO:0000255" key="1">
    <source>
        <dbReference type="HAMAP-Rule" id="MF_01849"/>
    </source>
</evidence>
<evidence type="ECO:0000255" key="2">
    <source>
        <dbReference type="PROSITE-ProRule" id="PRU01266"/>
    </source>
</evidence>
<protein>
    <recommendedName>
        <fullName evidence="1">Dual-specificity RNA methyltransferase RlmN</fullName>
        <ecNumber evidence="1">2.1.1.192</ecNumber>
    </recommendedName>
    <alternativeName>
        <fullName evidence="1">23S rRNA (adenine(2503)-C(2))-methyltransferase</fullName>
    </alternativeName>
    <alternativeName>
        <fullName evidence="1">23S rRNA m2A2503 methyltransferase</fullName>
    </alternativeName>
    <alternativeName>
        <fullName evidence="1">Ribosomal RNA large subunit methyltransferase N</fullName>
    </alternativeName>
    <alternativeName>
        <fullName evidence="1">tRNA (adenine(37)-C(2))-methyltransferase</fullName>
    </alternativeName>
    <alternativeName>
        <fullName evidence="1">tRNA m2A37 methyltransferase</fullName>
    </alternativeName>
</protein>
<feature type="chain" id="PRO_0000350416" description="Dual-specificity RNA methyltransferase RlmN">
    <location>
        <begin position="1"/>
        <end position="397"/>
    </location>
</feature>
<feature type="domain" description="Radical SAM core" evidence="2">
    <location>
        <begin position="122"/>
        <end position="366"/>
    </location>
</feature>
<feature type="active site" description="Proton acceptor" evidence="1">
    <location>
        <position position="116"/>
    </location>
</feature>
<feature type="active site" description="S-methylcysteine intermediate" evidence="1">
    <location>
        <position position="371"/>
    </location>
</feature>
<feature type="binding site" evidence="1">
    <location>
        <position position="136"/>
    </location>
    <ligand>
        <name>[4Fe-4S] cluster</name>
        <dbReference type="ChEBI" id="CHEBI:49883"/>
        <note>4Fe-4S-S-AdoMet</note>
    </ligand>
</feature>
<feature type="binding site" evidence="1">
    <location>
        <position position="140"/>
    </location>
    <ligand>
        <name>[4Fe-4S] cluster</name>
        <dbReference type="ChEBI" id="CHEBI:49883"/>
        <note>4Fe-4S-S-AdoMet</note>
    </ligand>
</feature>
<feature type="binding site" evidence="1">
    <location>
        <position position="143"/>
    </location>
    <ligand>
        <name>[4Fe-4S] cluster</name>
        <dbReference type="ChEBI" id="CHEBI:49883"/>
        <note>4Fe-4S-S-AdoMet</note>
    </ligand>
</feature>
<feature type="binding site" evidence="1">
    <location>
        <begin position="195"/>
        <end position="196"/>
    </location>
    <ligand>
        <name>S-adenosyl-L-methionine</name>
        <dbReference type="ChEBI" id="CHEBI:59789"/>
    </ligand>
</feature>
<feature type="binding site" evidence="1">
    <location>
        <position position="227"/>
    </location>
    <ligand>
        <name>S-adenosyl-L-methionine</name>
        <dbReference type="ChEBI" id="CHEBI:59789"/>
    </ligand>
</feature>
<feature type="binding site" evidence="1">
    <location>
        <begin position="249"/>
        <end position="251"/>
    </location>
    <ligand>
        <name>S-adenosyl-L-methionine</name>
        <dbReference type="ChEBI" id="CHEBI:59789"/>
    </ligand>
</feature>
<feature type="binding site" evidence="1">
    <location>
        <position position="328"/>
    </location>
    <ligand>
        <name>S-adenosyl-L-methionine</name>
        <dbReference type="ChEBI" id="CHEBI:59789"/>
    </ligand>
</feature>
<feature type="disulfide bond" description="(transient)" evidence="1">
    <location>
        <begin position="129"/>
        <end position="371"/>
    </location>
</feature>
<accession>Q1GC70</accession>